<comment type="function">
    <text evidence="1">Required for accurate and efficient protein synthesis under certain stress conditions. May act as a fidelity factor of the translation reaction, by catalyzing a one-codon backward translocation of tRNAs on improperly translocated ribosomes. Back-translocation proceeds from a post-translocation (POST) complex to a pre-translocation (PRE) complex, thus giving elongation factor G a second chance to translocate the tRNAs correctly. Binds to ribosomes in a GTP-dependent manner.</text>
</comment>
<comment type="catalytic activity">
    <reaction evidence="1">
        <text>GTP + H2O = GDP + phosphate + H(+)</text>
        <dbReference type="Rhea" id="RHEA:19669"/>
        <dbReference type="ChEBI" id="CHEBI:15377"/>
        <dbReference type="ChEBI" id="CHEBI:15378"/>
        <dbReference type="ChEBI" id="CHEBI:37565"/>
        <dbReference type="ChEBI" id="CHEBI:43474"/>
        <dbReference type="ChEBI" id="CHEBI:58189"/>
        <dbReference type="EC" id="3.6.5.n1"/>
    </reaction>
</comment>
<comment type="subcellular location">
    <subcellularLocation>
        <location evidence="1">Cell inner membrane</location>
        <topology evidence="1">Peripheral membrane protein</topology>
        <orientation evidence="1">Cytoplasmic side</orientation>
    </subcellularLocation>
</comment>
<comment type="similarity">
    <text evidence="1">Belongs to the TRAFAC class translation factor GTPase superfamily. Classic translation factor GTPase family. LepA subfamily.</text>
</comment>
<reference key="1">
    <citation type="submission" date="2006-09" db="EMBL/GenBank/DDBJ databases">
        <title>Complete sequence of Rhodopseudomonas palustris BisA53.</title>
        <authorList>
            <consortium name="US DOE Joint Genome Institute"/>
            <person name="Copeland A."/>
            <person name="Lucas S."/>
            <person name="Lapidus A."/>
            <person name="Barry K."/>
            <person name="Detter J.C."/>
            <person name="Glavina del Rio T."/>
            <person name="Hammon N."/>
            <person name="Israni S."/>
            <person name="Dalin E."/>
            <person name="Tice H."/>
            <person name="Pitluck S."/>
            <person name="Chain P."/>
            <person name="Malfatti S."/>
            <person name="Shin M."/>
            <person name="Vergez L."/>
            <person name="Schmutz J."/>
            <person name="Larimer F."/>
            <person name="Land M."/>
            <person name="Hauser L."/>
            <person name="Pelletier D.A."/>
            <person name="Kyrpides N."/>
            <person name="Kim E."/>
            <person name="Harwood C.S."/>
            <person name="Oda Y."/>
            <person name="Richardson P."/>
        </authorList>
    </citation>
    <scope>NUCLEOTIDE SEQUENCE [LARGE SCALE GENOMIC DNA]</scope>
    <source>
        <strain>BisA53</strain>
    </source>
</reference>
<accession>Q07TF1</accession>
<evidence type="ECO:0000255" key="1">
    <source>
        <dbReference type="HAMAP-Rule" id="MF_00071"/>
    </source>
</evidence>
<feature type="chain" id="PRO_1000032043" description="Elongation factor 4">
    <location>
        <begin position="1"/>
        <end position="603"/>
    </location>
</feature>
<feature type="domain" description="tr-type G">
    <location>
        <begin position="7"/>
        <end position="191"/>
    </location>
</feature>
<feature type="binding site" evidence="1">
    <location>
        <begin position="19"/>
        <end position="24"/>
    </location>
    <ligand>
        <name>GTP</name>
        <dbReference type="ChEBI" id="CHEBI:37565"/>
    </ligand>
</feature>
<feature type="binding site" evidence="1">
    <location>
        <begin position="138"/>
        <end position="141"/>
    </location>
    <ligand>
        <name>GTP</name>
        <dbReference type="ChEBI" id="CHEBI:37565"/>
    </ligand>
</feature>
<dbReference type="EC" id="3.6.5.n1" evidence="1"/>
<dbReference type="EMBL" id="CP000463">
    <property type="protein sequence ID" value="ABJ04783.1"/>
    <property type="molecule type" value="Genomic_DNA"/>
</dbReference>
<dbReference type="SMR" id="Q07TF1"/>
<dbReference type="STRING" id="316055.RPE_0827"/>
<dbReference type="KEGG" id="rpe:RPE_0827"/>
<dbReference type="eggNOG" id="COG0481">
    <property type="taxonomic scope" value="Bacteria"/>
</dbReference>
<dbReference type="HOGENOM" id="CLU_009995_3_3_5"/>
<dbReference type="OrthoDB" id="9802948at2"/>
<dbReference type="GO" id="GO:0005886">
    <property type="term" value="C:plasma membrane"/>
    <property type="evidence" value="ECO:0007669"/>
    <property type="project" value="UniProtKB-SubCell"/>
</dbReference>
<dbReference type="GO" id="GO:0005525">
    <property type="term" value="F:GTP binding"/>
    <property type="evidence" value="ECO:0007669"/>
    <property type="project" value="UniProtKB-UniRule"/>
</dbReference>
<dbReference type="GO" id="GO:0003924">
    <property type="term" value="F:GTPase activity"/>
    <property type="evidence" value="ECO:0007669"/>
    <property type="project" value="UniProtKB-UniRule"/>
</dbReference>
<dbReference type="GO" id="GO:0097216">
    <property type="term" value="F:guanosine tetraphosphate binding"/>
    <property type="evidence" value="ECO:0007669"/>
    <property type="project" value="UniProtKB-ARBA"/>
</dbReference>
<dbReference type="GO" id="GO:0043022">
    <property type="term" value="F:ribosome binding"/>
    <property type="evidence" value="ECO:0007669"/>
    <property type="project" value="UniProtKB-UniRule"/>
</dbReference>
<dbReference type="GO" id="GO:0003746">
    <property type="term" value="F:translation elongation factor activity"/>
    <property type="evidence" value="ECO:0007669"/>
    <property type="project" value="UniProtKB-UniRule"/>
</dbReference>
<dbReference type="GO" id="GO:0045727">
    <property type="term" value="P:positive regulation of translation"/>
    <property type="evidence" value="ECO:0007669"/>
    <property type="project" value="UniProtKB-UniRule"/>
</dbReference>
<dbReference type="CDD" id="cd16260">
    <property type="entry name" value="EF4_III"/>
    <property type="match status" value="1"/>
</dbReference>
<dbReference type="CDD" id="cd01890">
    <property type="entry name" value="LepA"/>
    <property type="match status" value="1"/>
</dbReference>
<dbReference type="CDD" id="cd03709">
    <property type="entry name" value="lepA_C"/>
    <property type="match status" value="1"/>
</dbReference>
<dbReference type="FunFam" id="3.40.50.300:FF:000078">
    <property type="entry name" value="Elongation factor 4"/>
    <property type="match status" value="1"/>
</dbReference>
<dbReference type="FunFam" id="2.40.30.10:FF:000015">
    <property type="entry name" value="Translation factor GUF1, mitochondrial"/>
    <property type="match status" value="1"/>
</dbReference>
<dbReference type="FunFam" id="3.30.70.240:FF:000007">
    <property type="entry name" value="Translation factor GUF1, mitochondrial"/>
    <property type="match status" value="1"/>
</dbReference>
<dbReference type="FunFam" id="3.30.70.2570:FF:000001">
    <property type="entry name" value="Translation factor GUF1, mitochondrial"/>
    <property type="match status" value="1"/>
</dbReference>
<dbReference type="FunFam" id="3.30.70.870:FF:000004">
    <property type="entry name" value="Translation factor GUF1, mitochondrial"/>
    <property type="match status" value="1"/>
</dbReference>
<dbReference type="Gene3D" id="3.30.70.240">
    <property type="match status" value="1"/>
</dbReference>
<dbReference type="Gene3D" id="3.30.70.2570">
    <property type="entry name" value="Elongation factor 4, C-terminal domain"/>
    <property type="match status" value="1"/>
</dbReference>
<dbReference type="Gene3D" id="3.30.70.870">
    <property type="entry name" value="Elongation Factor G (Translational Gtpase), domain 3"/>
    <property type="match status" value="1"/>
</dbReference>
<dbReference type="Gene3D" id="3.40.50.300">
    <property type="entry name" value="P-loop containing nucleotide triphosphate hydrolases"/>
    <property type="match status" value="1"/>
</dbReference>
<dbReference type="Gene3D" id="2.40.30.10">
    <property type="entry name" value="Translation factors"/>
    <property type="match status" value="1"/>
</dbReference>
<dbReference type="HAMAP" id="MF_00071">
    <property type="entry name" value="LepA"/>
    <property type="match status" value="1"/>
</dbReference>
<dbReference type="InterPro" id="IPR006297">
    <property type="entry name" value="EF-4"/>
</dbReference>
<dbReference type="InterPro" id="IPR035647">
    <property type="entry name" value="EFG_III/V"/>
</dbReference>
<dbReference type="InterPro" id="IPR000640">
    <property type="entry name" value="EFG_V-like"/>
</dbReference>
<dbReference type="InterPro" id="IPR004161">
    <property type="entry name" value="EFTu-like_2"/>
</dbReference>
<dbReference type="InterPro" id="IPR031157">
    <property type="entry name" value="G_TR_CS"/>
</dbReference>
<dbReference type="InterPro" id="IPR038363">
    <property type="entry name" value="LepA_C_sf"/>
</dbReference>
<dbReference type="InterPro" id="IPR013842">
    <property type="entry name" value="LepA_CTD"/>
</dbReference>
<dbReference type="InterPro" id="IPR035654">
    <property type="entry name" value="LepA_IV"/>
</dbReference>
<dbReference type="InterPro" id="IPR027417">
    <property type="entry name" value="P-loop_NTPase"/>
</dbReference>
<dbReference type="InterPro" id="IPR005225">
    <property type="entry name" value="Small_GTP-bd"/>
</dbReference>
<dbReference type="InterPro" id="IPR000795">
    <property type="entry name" value="T_Tr_GTP-bd_dom"/>
</dbReference>
<dbReference type="NCBIfam" id="TIGR01393">
    <property type="entry name" value="lepA"/>
    <property type="match status" value="1"/>
</dbReference>
<dbReference type="NCBIfam" id="TIGR00231">
    <property type="entry name" value="small_GTP"/>
    <property type="match status" value="1"/>
</dbReference>
<dbReference type="PANTHER" id="PTHR43512:SF4">
    <property type="entry name" value="TRANSLATION FACTOR GUF1 HOMOLOG, CHLOROPLASTIC"/>
    <property type="match status" value="1"/>
</dbReference>
<dbReference type="PANTHER" id="PTHR43512">
    <property type="entry name" value="TRANSLATION FACTOR GUF1-RELATED"/>
    <property type="match status" value="1"/>
</dbReference>
<dbReference type="Pfam" id="PF00679">
    <property type="entry name" value="EFG_C"/>
    <property type="match status" value="1"/>
</dbReference>
<dbReference type="Pfam" id="PF00009">
    <property type="entry name" value="GTP_EFTU"/>
    <property type="match status" value="1"/>
</dbReference>
<dbReference type="Pfam" id="PF03144">
    <property type="entry name" value="GTP_EFTU_D2"/>
    <property type="match status" value="1"/>
</dbReference>
<dbReference type="Pfam" id="PF06421">
    <property type="entry name" value="LepA_C"/>
    <property type="match status" value="1"/>
</dbReference>
<dbReference type="PRINTS" id="PR00315">
    <property type="entry name" value="ELONGATNFCT"/>
</dbReference>
<dbReference type="SMART" id="SM00838">
    <property type="entry name" value="EFG_C"/>
    <property type="match status" value="1"/>
</dbReference>
<dbReference type="SUPFAM" id="SSF54980">
    <property type="entry name" value="EF-G C-terminal domain-like"/>
    <property type="match status" value="2"/>
</dbReference>
<dbReference type="SUPFAM" id="SSF52540">
    <property type="entry name" value="P-loop containing nucleoside triphosphate hydrolases"/>
    <property type="match status" value="1"/>
</dbReference>
<dbReference type="PROSITE" id="PS00301">
    <property type="entry name" value="G_TR_1"/>
    <property type="match status" value="1"/>
</dbReference>
<dbReference type="PROSITE" id="PS51722">
    <property type="entry name" value="G_TR_2"/>
    <property type="match status" value="1"/>
</dbReference>
<organism>
    <name type="scientific">Rhodopseudomonas palustris (strain BisA53)</name>
    <dbReference type="NCBI Taxonomy" id="316055"/>
    <lineage>
        <taxon>Bacteria</taxon>
        <taxon>Pseudomonadati</taxon>
        <taxon>Pseudomonadota</taxon>
        <taxon>Alphaproteobacteria</taxon>
        <taxon>Hyphomicrobiales</taxon>
        <taxon>Nitrobacteraceae</taxon>
        <taxon>Rhodopseudomonas</taxon>
    </lineage>
</organism>
<name>LEPA_RHOP5</name>
<protein>
    <recommendedName>
        <fullName evidence="1">Elongation factor 4</fullName>
        <shortName evidence="1">EF-4</shortName>
        <ecNumber evidence="1">3.6.5.n1</ecNumber>
    </recommendedName>
    <alternativeName>
        <fullName evidence="1">Ribosomal back-translocase LepA</fullName>
    </alternativeName>
</protein>
<keyword id="KW-0997">Cell inner membrane</keyword>
<keyword id="KW-1003">Cell membrane</keyword>
<keyword id="KW-0342">GTP-binding</keyword>
<keyword id="KW-0378">Hydrolase</keyword>
<keyword id="KW-0472">Membrane</keyword>
<keyword id="KW-0547">Nucleotide-binding</keyword>
<keyword id="KW-0648">Protein biosynthesis</keyword>
<sequence>MTTAPIDNIRNFSIVAHIDHGKSTLADRLIQITGGMTDREMAGKEQVLDSMDIERERGITIKAQTVRLNYHAKDGKDYIFNLMDTPGHVDFAYEVSRSLAACEGSLLVVDASQGVEAQTLANVYHALDAGHEIVPVLNKVDLPAAEPEMIKQQIEDVIGLDASDAVMISAKTGFGVPEVLEAIVTRLPPPKGDRTASLKALLVDSWYDVYLGVVVLVRVVDGVMKKGQRIRMMGTNAAYDLERVGYFTPKMTAVDELGPGEIGFITAAIKEVADTRVGDTITDDRKPITEMLPGFKPAIPVVFCGLFPVDADDFETLRAAMGKLRLNDASFSFEMETSAALGFGFRCGFLGLLHLEIIQERLSREFDLDLIATAPSVIYKMKLNDGSEIEIHNPVDMPDVVRIQEIDEPWIEATILTPDEYLGSVLKLCQDRRGNQKELTYVGARAMVKYDLPLNEVVFDFYDRLKSVSKGYASFDYHLTDYKPADLVKMQILVNAEPVDALSMLVHRTRAEGRGRAMVEKMKELIPPHMFVIPIQAAIGGKIIARETVRALRKDVTAKCYGGDVTRKRKLLEKQKEGKKKLRQFGKVDIPQEAFIAALKVDS</sequence>
<proteinExistence type="inferred from homology"/>
<gene>
    <name evidence="1" type="primary">lepA</name>
    <name type="ordered locus">RPE_0827</name>
</gene>